<reference key="1">
    <citation type="journal article" date="1996" name="Nucleic Acids Res.">
        <title>Complete sequence analysis of the genome of the bacterium Mycoplasma pneumoniae.</title>
        <authorList>
            <person name="Himmelreich R."/>
            <person name="Hilbert H."/>
            <person name="Plagens H."/>
            <person name="Pirkl E."/>
            <person name="Li B.-C."/>
            <person name="Herrmann R."/>
        </authorList>
    </citation>
    <scope>NUCLEOTIDE SEQUENCE [LARGE SCALE GENOMIC DNA]</scope>
    <source>
        <strain>ATCC 29342 / M129 / Subtype 1</strain>
    </source>
</reference>
<sequence length="288" mass="32435">MKHISAVYNPAFTNIASKLNQTELLKDAAQSLNIQLDFFTCFDINTNQDKTKLPFKSNTILFLDKNIALAQWLESVGLRVINSSIAINNADNKALSHAVLAQHPTIKQIPTLIGPQNFRLAWYPEKLEQFIEQIKRCFQFPVIVKSIYGSFGDYVFLCKDEQKLRQTLSGLTEQIIVQQYIATSNSEAVRVIVVNNQVVGALHTQNEGDFRSNLNKGAVGEPYQLSQEETKLAITISQAMQLFYCGIDFLFDQDRSLIFCEVNSNVQLTKSSMYLKTNLAIQLLASIA</sequence>
<organism>
    <name type="scientific">Mycoplasma pneumoniae (strain ATCC 29342 / M129 / Subtype 1)</name>
    <name type="common">Mycoplasmoides pneumoniae</name>
    <dbReference type="NCBI Taxonomy" id="272634"/>
    <lineage>
        <taxon>Bacteria</taxon>
        <taxon>Bacillati</taxon>
        <taxon>Mycoplasmatota</taxon>
        <taxon>Mycoplasmoidales</taxon>
        <taxon>Mycoplasmoidaceae</taxon>
        <taxon>Mycoplasmoides</taxon>
    </lineage>
</organism>
<comment type="similarity">
    <text evidence="3">Belongs to the RimK family.</text>
</comment>
<accession>P75097</accession>
<gene>
    <name type="ordered locus">MPN_016</name>
    <name type="ORF">D12_orf288</name>
    <name type="ORF">MP138</name>
</gene>
<feature type="chain" id="PRO_0000205507" description="Uncharacterized protein MG012 homolog">
    <location>
        <begin position="1"/>
        <end position="288"/>
    </location>
</feature>
<feature type="domain" description="ATP-grasp" evidence="2">
    <location>
        <begin position="107"/>
        <end position="288"/>
    </location>
</feature>
<feature type="binding site" evidence="1">
    <location>
        <position position="145"/>
    </location>
    <ligand>
        <name>ATP</name>
        <dbReference type="ChEBI" id="CHEBI:30616"/>
    </ligand>
</feature>
<feature type="binding site" evidence="2">
    <location>
        <begin position="178"/>
        <end position="188"/>
    </location>
    <ligand>
        <name>ATP</name>
        <dbReference type="ChEBI" id="CHEBI:30616"/>
    </ligand>
</feature>
<feature type="binding site" evidence="2">
    <location>
        <position position="248"/>
    </location>
    <ligand>
        <name>Mg(2+)</name>
        <dbReference type="ChEBI" id="CHEBI:18420"/>
        <label>1</label>
    </ligand>
</feature>
<feature type="binding site" evidence="2">
    <location>
        <position position="248"/>
    </location>
    <ligand>
        <name>Mn(2+)</name>
        <dbReference type="ChEBI" id="CHEBI:29035"/>
        <label>1</label>
    </ligand>
</feature>
<feature type="binding site" evidence="2">
    <location>
        <position position="261"/>
    </location>
    <ligand>
        <name>Mg(2+)</name>
        <dbReference type="ChEBI" id="CHEBI:18420"/>
        <label>1</label>
    </ligand>
</feature>
<feature type="binding site" evidence="2">
    <location>
        <position position="261"/>
    </location>
    <ligand>
        <name>Mg(2+)</name>
        <dbReference type="ChEBI" id="CHEBI:18420"/>
        <label>2</label>
    </ligand>
</feature>
<feature type="binding site" evidence="2">
    <location>
        <position position="261"/>
    </location>
    <ligand>
        <name>Mn(2+)</name>
        <dbReference type="ChEBI" id="CHEBI:29035"/>
        <label>1</label>
    </ligand>
</feature>
<feature type="binding site" evidence="2">
    <location>
        <position position="261"/>
    </location>
    <ligand>
        <name>Mn(2+)</name>
        <dbReference type="ChEBI" id="CHEBI:29035"/>
        <label>2</label>
    </ligand>
</feature>
<feature type="binding site" evidence="2">
    <location>
        <position position="263"/>
    </location>
    <ligand>
        <name>Mg(2+)</name>
        <dbReference type="ChEBI" id="CHEBI:18420"/>
        <label>2</label>
    </ligand>
</feature>
<feature type="binding site" evidence="2">
    <location>
        <position position="263"/>
    </location>
    <ligand>
        <name>Mn(2+)</name>
        <dbReference type="ChEBI" id="CHEBI:29035"/>
        <label>2</label>
    </ligand>
</feature>
<evidence type="ECO:0000255" key="1"/>
<evidence type="ECO:0000255" key="2">
    <source>
        <dbReference type="PROSITE-ProRule" id="PRU00409"/>
    </source>
</evidence>
<evidence type="ECO:0000305" key="3"/>
<proteinExistence type="inferred from homology"/>
<keyword id="KW-0067">ATP-binding</keyword>
<keyword id="KW-0460">Magnesium</keyword>
<keyword id="KW-0464">Manganese</keyword>
<keyword id="KW-0479">Metal-binding</keyword>
<keyword id="KW-0547">Nucleotide-binding</keyword>
<keyword id="KW-1185">Reference proteome</keyword>
<name>Y016_MYCPN</name>
<protein>
    <recommendedName>
        <fullName>Uncharacterized protein MG012 homolog</fullName>
    </recommendedName>
</protein>
<dbReference type="EMBL" id="U00089">
    <property type="protein sequence ID" value="AAB95786.1"/>
    <property type="molecule type" value="Genomic_DNA"/>
</dbReference>
<dbReference type="PIR" id="S73464">
    <property type="entry name" value="S73464"/>
</dbReference>
<dbReference type="RefSeq" id="NP_109704.1">
    <property type="nucleotide sequence ID" value="NC_000912.1"/>
</dbReference>
<dbReference type="RefSeq" id="WP_010874373.1">
    <property type="nucleotide sequence ID" value="NZ_OU342337.1"/>
</dbReference>
<dbReference type="SMR" id="P75097"/>
<dbReference type="IntAct" id="P75097">
    <property type="interactions" value="1"/>
</dbReference>
<dbReference type="STRING" id="272634.MPN_016"/>
<dbReference type="EnsemblBacteria" id="AAB95786">
    <property type="protein sequence ID" value="AAB95786"/>
    <property type="gene ID" value="MPN_016"/>
</dbReference>
<dbReference type="KEGG" id="mpn:MPN_016"/>
<dbReference type="PATRIC" id="fig|272634.6.peg.15"/>
<dbReference type="HOGENOM" id="CLU_054353_0_2_14"/>
<dbReference type="OrthoDB" id="9786585at2"/>
<dbReference type="BioCyc" id="MPNE272634:G1GJ3-23-MONOMER"/>
<dbReference type="Proteomes" id="UP000000808">
    <property type="component" value="Chromosome"/>
</dbReference>
<dbReference type="GO" id="GO:0005737">
    <property type="term" value="C:cytoplasm"/>
    <property type="evidence" value="ECO:0007669"/>
    <property type="project" value="TreeGrafter"/>
</dbReference>
<dbReference type="GO" id="GO:0005524">
    <property type="term" value="F:ATP binding"/>
    <property type="evidence" value="ECO:0007669"/>
    <property type="project" value="UniProtKB-KW"/>
</dbReference>
<dbReference type="GO" id="GO:0046872">
    <property type="term" value="F:metal ion binding"/>
    <property type="evidence" value="ECO:0007669"/>
    <property type="project" value="UniProtKB-KW"/>
</dbReference>
<dbReference type="GO" id="GO:0018169">
    <property type="term" value="F:ribosomal S6-glutamic acid ligase activity"/>
    <property type="evidence" value="ECO:0007669"/>
    <property type="project" value="TreeGrafter"/>
</dbReference>
<dbReference type="GO" id="GO:0036211">
    <property type="term" value="P:protein modification process"/>
    <property type="evidence" value="ECO:0007669"/>
    <property type="project" value="InterPro"/>
</dbReference>
<dbReference type="GO" id="GO:0009432">
    <property type="term" value="P:SOS response"/>
    <property type="evidence" value="ECO:0007669"/>
    <property type="project" value="TreeGrafter"/>
</dbReference>
<dbReference type="Gene3D" id="3.40.50.20">
    <property type="match status" value="1"/>
</dbReference>
<dbReference type="Gene3D" id="3.30.1490.20">
    <property type="entry name" value="ATP-grasp fold, A domain"/>
    <property type="match status" value="1"/>
</dbReference>
<dbReference type="Gene3D" id="3.30.470.20">
    <property type="entry name" value="ATP-grasp fold, B domain"/>
    <property type="match status" value="1"/>
</dbReference>
<dbReference type="InterPro" id="IPR011761">
    <property type="entry name" value="ATP-grasp"/>
</dbReference>
<dbReference type="InterPro" id="IPR013651">
    <property type="entry name" value="ATP-grasp_RimK-type"/>
</dbReference>
<dbReference type="InterPro" id="IPR013815">
    <property type="entry name" value="ATP_grasp_subdomain_1"/>
</dbReference>
<dbReference type="InterPro" id="IPR004666">
    <property type="entry name" value="Rp_bS6_RimK/Lys_biosynth_LsyX"/>
</dbReference>
<dbReference type="NCBIfam" id="TIGR00768">
    <property type="entry name" value="rimK_fam"/>
    <property type="match status" value="1"/>
</dbReference>
<dbReference type="PANTHER" id="PTHR21621:SF0">
    <property type="entry name" value="BETA-CITRYLGLUTAMATE SYNTHASE B-RELATED"/>
    <property type="match status" value="1"/>
</dbReference>
<dbReference type="PANTHER" id="PTHR21621">
    <property type="entry name" value="RIBOSOMAL PROTEIN S6 MODIFICATION PROTEIN"/>
    <property type="match status" value="1"/>
</dbReference>
<dbReference type="Pfam" id="PF08443">
    <property type="entry name" value="RimK"/>
    <property type="match status" value="1"/>
</dbReference>
<dbReference type="SUPFAM" id="SSF56059">
    <property type="entry name" value="Glutathione synthetase ATP-binding domain-like"/>
    <property type="match status" value="1"/>
</dbReference>
<dbReference type="PROSITE" id="PS50975">
    <property type="entry name" value="ATP_GRASP"/>
    <property type="match status" value="1"/>
</dbReference>